<comment type="function">
    <text evidence="1">Catalyzes the transfer of the phosphoribosyl group of 5-phosphorylribose-1-pyrophosphate (PRPP) to anthranilate to yield N-(5'-phosphoribosyl)-anthranilate (PRA).</text>
</comment>
<comment type="catalytic activity">
    <reaction evidence="1">
        <text>N-(5-phospho-beta-D-ribosyl)anthranilate + diphosphate = 5-phospho-alpha-D-ribose 1-diphosphate + anthranilate</text>
        <dbReference type="Rhea" id="RHEA:11768"/>
        <dbReference type="ChEBI" id="CHEBI:16567"/>
        <dbReference type="ChEBI" id="CHEBI:18277"/>
        <dbReference type="ChEBI" id="CHEBI:33019"/>
        <dbReference type="ChEBI" id="CHEBI:58017"/>
        <dbReference type="EC" id="2.4.2.18"/>
    </reaction>
</comment>
<comment type="cofactor">
    <cofactor evidence="1">
        <name>Mg(2+)</name>
        <dbReference type="ChEBI" id="CHEBI:18420"/>
    </cofactor>
    <text evidence="1">Binds 2 magnesium ions per monomer.</text>
</comment>
<comment type="pathway">
    <text evidence="1">Amino-acid biosynthesis; L-tryptophan biosynthesis; L-tryptophan from chorismate: step 2/5.</text>
</comment>
<comment type="subunit">
    <text evidence="1">Homodimer.</text>
</comment>
<comment type="similarity">
    <text evidence="1">Belongs to the anthranilate phosphoribosyltransferase family.</text>
</comment>
<organism>
    <name type="scientific">Geotalea uraniireducens (strain Rf4)</name>
    <name type="common">Geobacter uraniireducens</name>
    <dbReference type="NCBI Taxonomy" id="351605"/>
    <lineage>
        <taxon>Bacteria</taxon>
        <taxon>Pseudomonadati</taxon>
        <taxon>Thermodesulfobacteriota</taxon>
        <taxon>Desulfuromonadia</taxon>
        <taxon>Geobacterales</taxon>
        <taxon>Geobacteraceae</taxon>
        <taxon>Geotalea</taxon>
    </lineage>
</organism>
<dbReference type="EC" id="2.4.2.18" evidence="1"/>
<dbReference type="EMBL" id="CP000698">
    <property type="protein sequence ID" value="ABQ25927.1"/>
    <property type="molecule type" value="Genomic_DNA"/>
</dbReference>
<dbReference type="RefSeq" id="WP_011938633.1">
    <property type="nucleotide sequence ID" value="NC_009483.1"/>
</dbReference>
<dbReference type="SMR" id="A5GES2"/>
<dbReference type="STRING" id="351605.Gura_1733"/>
<dbReference type="KEGG" id="gur:Gura_1733"/>
<dbReference type="HOGENOM" id="CLU_034315_2_1_7"/>
<dbReference type="OrthoDB" id="9806430at2"/>
<dbReference type="UniPathway" id="UPA00035">
    <property type="reaction ID" value="UER00041"/>
</dbReference>
<dbReference type="Proteomes" id="UP000006695">
    <property type="component" value="Chromosome"/>
</dbReference>
<dbReference type="GO" id="GO:0005829">
    <property type="term" value="C:cytosol"/>
    <property type="evidence" value="ECO:0007669"/>
    <property type="project" value="TreeGrafter"/>
</dbReference>
<dbReference type="GO" id="GO:0004048">
    <property type="term" value="F:anthranilate phosphoribosyltransferase activity"/>
    <property type="evidence" value="ECO:0007669"/>
    <property type="project" value="UniProtKB-UniRule"/>
</dbReference>
<dbReference type="GO" id="GO:0000287">
    <property type="term" value="F:magnesium ion binding"/>
    <property type="evidence" value="ECO:0007669"/>
    <property type="project" value="UniProtKB-UniRule"/>
</dbReference>
<dbReference type="GO" id="GO:0000162">
    <property type="term" value="P:L-tryptophan biosynthetic process"/>
    <property type="evidence" value="ECO:0007669"/>
    <property type="project" value="UniProtKB-UniRule"/>
</dbReference>
<dbReference type="FunFam" id="1.20.970.10:FF:000006">
    <property type="entry name" value="Anthranilate phosphoribosyltransferase"/>
    <property type="match status" value="1"/>
</dbReference>
<dbReference type="FunFam" id="3.40.1030.10:FF:000002">
    <property type="entry name" value="Anthranilate phosphoribosyltransferase"/>
    <property type="match status" value="1"/>
</dbReference>
<dbReference type="Gene3D" id="3.40.1030.10">
    <property type="entry name" value="Nucleoside phosphorylase/phosphoribosyltransferase catalytic domain"/>
    <property type="match status" value="1"/>
</dbReference>
<dbReference type="Gene3D" id="1.20.970.10">
    <property type="entry name" value="Transferase, Pyrimidine Nucleoside Phosphorylase, Chain C"/>
    <property type="match status" value="1"/>
</dbReference>
<dbReference type="HAMAP" id="MF_00211">
    <property type="entry name" value="TrpD"/>
    <property type="match status" value="1"/>
</dbReference>
<dbReference type="InterPro" id="IPR005940">
    <property type="entry name" value="Anthranilate_Pribosyl_Tfrase"/>
</dbReference>
<dbReference type="InterPro" id="IPR000312">
    <property type="entry name" value="Glycosyl_Trfase_fam3"/>
</dbReference>
<dbReference type="InterPro" id="IPR017459">
    <property type="entry name" value="Glycosyl_Trfase_fam3_N_dom"/>
</dbReference>
<dbReference type="InterPro" id="IPR036320">
    <property type="entry name" value="Glycosyl_Trfase_fam3_N_dom_sf"/>
</dbReference>
<dbReference type="InterPro" id="IPR035902">
    <property type="entry name" value="Nuc_phospho_transferase"/>
</dbReference>
<dbReference type="NCBIfam" id="TIGR01245">
    <property type="entry name" value="trpD"/>
    <property type="match status" value="1"/>
</dbReference>
<dbReference type="PANTHER" id="PTHR43285">
    <property type="entry name" value="ANTHRANILATE PHOSPHORIBOSYLTRANSFERASE"/>
    <property type="match status" value="1"/>
</dbReference>
<dbReference type="PANTHER" id="PTHR43285:SF2">
    <property type="entry name" value="ANTHRANILATE PHOSPHORIBOSYLTRANSFERASE"/>
    <property type="match status" value="1"/>
</dbReference>
<dbReference type="Pfam" id="PF02885">
    <property type="entry name" value="Glycos_trans_3N"/>
    <property type="match status" value="1"/>
</dbReference>
<dbReference type="Pfam" id="PF00591">
    <property type="entry name" value="Glycos_transf_3"/>
    <property type="match status" value="1"/>
</dbReference>
<dbReference type="SUPFAM" id="SSF52418">
    <property type="entry name" value="Nucleoside phosphorylase/phosphoribosyltransferase catalytic domain"/>
    <property type="match status" value="1"/>
</dbReference>
<dbReference type="SUPFAM" id="SSF47648">
    <property type="entry name" value="Nucleoside phosphorylase/phosphoribosyltransferase N-terminal domain"/>
    <property type="match status" value="1"/>
</dbReference>
<sequence>MIKKAIAKVVEREDLTESEMIQVMDQVMSGEATPAQIAAFITALRMKGETVAEITGAARVMRDKVTRIRVGKNILDMDRDDINVDLETILDTCGTGGSCTNTFNVSTTVAFVVSACGVKVAKHGNRSVSSACGSADVLESLGVNLDVTQETIERCINEIGIGFLFAPALHGAMKYAIGPRKEIGIRTIFNILGPLTNPAGAGCQVLGVYREDLVEKLAHVLKNLGCKRGFVVHGQDGMDEMTLTAETRIAEVTPAGVATRLFRPEELGLSRCGMDDLRGGDAAANAVIVRRVLEGEKGPKRDIVLLNAAFGLVAAGRVVDPAAGLTMAAEAIDSGKALAQLEKLVKLTNE</sequence>
<proteinExistence type="inferred from homology"/>
<feature type="chain" id="PRO_1000078015" description="Anthranilate phosphoribosyltransferase">
    <location>
        <begin position="1"/>
        <end position="350"/>
    </location>
</feature>
<feature type="binding site" evidence="1">
    <location>
        <position position="94"/>
    </location>
    <ligand>
        <name>5-phospho-alpha-D-ribose 1-diphosphate</name>
        <dbReference type="ChEBI" id="CHEBI:58017"/>
    </ligand>
</feature>
<feature type="binding site" evidence="1">
    <location>
        <position position="94"/>
    </location>
    <ligand>
        <name>anthranilate</name>
        <dbReference type="ChEBI" id="CHEBI:16567"/>
        <label>1</label>
    </ligand>
</feature>
<feature type="binding site" evidence="1">
    <location>
        <begin position="97"/>
        <end position="98"/>
    </location>
    <ligand>
        <name>5-phospho-alpha-D-ribose 1-diphosphate</name>
        <dbReference type="ChEBI" id="CHEBI:58017"/>
    </ligand>
</feature>
<feature type="binding site" evidence="1">
    <location>
        <position position="102"/>
    </location>
    <ligand>
        <name>5-phospho-alpha-D-ribose 1-diphosphate</name>
        <dbReference type="ChEBI" id="CHEBI:58017"/>
    </ligand>
</feature>
<feature type="binding site" evidence="1">
    <location>
        <begin position="104"/>
        <end position="107"/>
    </location>
    <ligand>
        <name>5-phospho-alpha-D-ribose 1-diphosphate</name>
        <dbReference type="ChEBI" id="CHEBI:58017"/>
    </ligand>
</feature>
<feature type="binding site" evidence="1">
    <location>
        <position position="106"/>
    </location>
    <ligand>
        <name>Mg(2+)</name>
        <dbReference type="ChEBI" id="CHEBI:18420"/>
        <label>1</label>
    </ligand>
</feature>
<feature type="binding site" evidence="1">
    <location>
        <begin position="122"/>
        <end position="130"/>
    </location>
    <ligand>
        <name>5-phospho-alpha-D-ribose 1-diphosphate</name>
        <dbReference type="ChEBI" id="CHEBI:58017"/>
    </ligand>
</feature>
<feature type="binding site" evidence="1">
    <location>
        <position position="125"/>
    </location>
    <ligand>
        <name>anthranilate</name>
        <dbReference type="ChEBI" id="CHEBI:16567"/>
        <label>1</label>
    </ligand>
</feature>
<feature type="binding site" evidence="1">
    <location>
        <position position="134"/>
    </location>
    <ligand>
        <name>5-phospho-alpha-D-ribose 1-diphosphate</name>
        <dbReference type="ChEBI" id="CHEBI:58017"/>
    </ligand>
</feature>
<feature type="binding site" evidence="1">
    <location>
        <position position="180"/>
    </location>
    <ligand>
        <name>anthranilate</name>
        <dbReference type="ChEBI" id="CHEBI:16567"/>
        <label>2</label>
    </ligand>
</feature>
<feature type="binding site" evidence="1">
    <location>
        <position position="239"/>
    </location>
    <ligand>
        <name>Mg(2+)</name>
        <dbReference type="ChEBI" id="CHEBI:18420"/>
        <label>2</label>
    </ligand>
</feature>
<feature type="binding site" evidence="1">
    <location>
        <position position="240"/>
    </location>
    <ligand>
        <name>Mg(2+)</name>
        <dbReference type="ChEBI" id="CHEBI:18420"/>
        <label>1</label>
    </ligand>
</feature>
<feature type="binding site" evidence="1">
    <location>
        <position position="240"/>
    </location>
    <ligand>
        <name>Mg(2+)</name>
        <dbReference type="ChEBI" id="CHEBI:18420"/>
        <label>2</label>
    </ligand>
</feature>
<evidence type="ECO:0000255" key="1">
    <source>
        <dbReference type="HAMAP-Rule" id="MF_00211"/>
    </source>
</evidence>
<reference key="1">
    <citation type="submission" date="2007-05" db="EMBL/GenBank/DDBJ databases">
        <title>Complete sequence of Geobacter uraniireducens Rf4.</title>
        <authorList>
            <consortium name="US DOE Joint Genome Institute"/>
            <person name="Copeland A."/>
            <person name="Lucas S."/>
            <person name="Lapidus A."/>
            <person name="Barry K."/>
            <person name="Detter J.C."/>
            <person name="Glavina del Rio T."/>
            <person name="Hammon N."/>
            <person name="Israni S."/>
            <person name="Dalin E."/>
            <person name="Tice H."/>
            <person name="Pitluck S."/>
            <person name="Chertkov O."/>
            <person name="Brettin T."/>
            <person name="Bruce D."/>
            <person name="Han C."/>
            <person name="Schmutz J."/>
            <person name="Larimer F."/>
            <person name="Land M."/>
            <person name="Hauser L."/>
            <person name="Kyrpides N."/>
            <person name="Mikhailova N."/>
            <person name="Shelobolina E."/>
            <person name="Aklujkar M."/>
            <person name="Lovley D."/>
            <person name="Richardson P."/>
        </authorList>
    </citation>
    <scope>NUCLEOTIDE SEQUENCE [LARGE SCALE GENOMIC DNA]</scope>
    <source>
        <strain>ATCC BAA-1134 / JCM 13001 / Rf4</strain>
    </source>
</reference>
<gene>
    <name evidence="1" type="primary">trpD</name>
    <name type="ordered locus">Gura_1733</name>
</gene>
<name>TRPD_GEOUR</name>
<accession>A5GES2</accession>
<keyword id="KW-0028">Amino-acid biosynthesis</keyword>
<keyword id="KW-0057">Aromatic amino acid biosynthesis</keyword>
<keyword id="KW-0328">Glycosyltransferase</keyword>
<keyword id="KW-0460">Magnesium</keyword>
<keyword id="KW-0479">Metal-binding</keyword>
<keyword id="KW-1185">Reference proteome</keyword>
<keyword id="KW-0808">Transferase</keyword>
<keyword id="KW-0822">Tryptophan biosynthesis</keyword>
<protein>
    <recommendedName>
        <fullName evidence="1">Anthranilate phosphoribosyltransferase</fullName>
        <ecNumber evidence="1">2.4.2.18</ecNumber>
    </recommendedName>
</protein>